<gene>
    <name evidence="1" type="primary">rplA</name>
    <name type="ordered locus">YE0282</name>
</gene>
<accession>A1JIH7</accession>
<name>RL1_YERE8</name>
<dbReference type="EMBL" id="AM286415">
    <property type="protein sequence ID" value="CAL10415.1"/>
    <property type="molecule type" value="Genomic_DNA"/>
</dbReference>
<dbReference type="RefSeq" id="WP_005165803.1">
    <property type="nucleotide sequence ID" value="NC_008800.1"/>
</dbReference>
<dbReference type="RefSeq" id="YP_001004665.1">
    <property type="nucleotide sequence ID" value="NC_008800.1"/>
</dbReference>
<dbReference type="SMR" id="A1JIH7"/>
<dbReference type="GeneID" id="31411432"/>
<dbReference type="KEGG" id="yen:YE0282"/>
<dbReference type="PATRIC" id="fig|393305.7.peg.375"/>
<dbReference type="eggNOG" id="COG0081">
    <property type="taxonomic scope" value="Bacteria"/>
</dbReference>
<dbReference type="HOGENOM" id="CLU_062853_0_0_6"/>
<dbReference type="OrthoDB" id="9803740at2"/>
<dbReference type="Proteomes" id="UP000000642">
    <property type="component" value="Chromosome"/>
</dbReference>
<dbReference type="GO" id="GO:0022625">
    <property type="term" value="C:cytosolic large ribosomal subunit"/>
    <property type="evidence" value="ECO:0007669"/>
    <property type="project" value="TreeGrafter"/>
</dbReference>
<dbReference type="GO" id="GO:0019843">
    <property type="term" value="F:rRNA binding"/>
    <property type="evidence" value="ECO:0007669"/>
    <property type="project" value="UniProtKB-UniRule"/>
</dbReference>
<dbReference type="GO" id="GO:0003735">
    <property type="term" value="F:structural constituent of ribosome"/>
    <property type="evidence" value="ECO:0007669"/>
    <property type="project" value="InterPro"/>
</dbReference>
<dbReference type="GO" id="GO:0000049">
    <property type="term" value="F:tRNA binding"/>
    <property type="evidence" value="ECO:0007669"/>
    <property type="project" value="UniProtKB-KW"/>
</dbReference>
<dbReference type="GO" id="GO:0006417">
    <property type="term" value="P:regulation of translation"/>
    <property type="evidence" value="ECO:0007669"/>
    <property type="project" value="UniProtKB-KW"/>
</dbReference>
<dbReference type="GO" id="GO:0006412">
    <property type="term" value="P:translation"/>
    <property type="evidence" value="ECO:0007669"/>
    <property type="project" value="UniProtKB-UniRule"/>
</dbReference>
<dbReference type="CDD" id="cd00403">
    <property type="entry name" value="Ribosomal_L1"/>
    <property type="match status" value="1"/>
</dbReference>
<dbReference type="FunFam" id="3.40.50.790:FF:000001">
    <property type="entry name" value="50S ribosomal protein L1"/>
    <property type="match status" value="1"/>
</dbReference>
<dbReference type="Gene3D" id="3.30.190.20">
    <property type="match status" value="1"/>
</dbReference>
<dbReference type="Gene3D" id="3.40.50.790">
    <property type="match status" value="1"/>
</dbReference>
<dbReference type="HAMAP" id="MF_01318_B">
    <property type="entry name" value="Ribosomal_uL1_B"/>
    <property type="match status" value="1"/>
</dbReference>
<dbReference type="InterPro" id="IPR005878">
    <property type="entry name" value="Ribosom_uL1_bac-type"/>
</dbReference>
<dbReference type="InterPro" id="IPR002143">
    <property type="entry name" value="Ribosomal_uL1"/>
</dbReference>
<dbReference type="InterPro" id="IPR023674">
    <property type="entry name" value="Ribosomal_uL1-like"/>
</dbReference>
<dbReference type="InterPro" id="IPR028364">
    <property type="entry name" value="Ribosomal_uL1/biogenesis"/>
</dbReference>
<dbReference type="InterPro" id="IPR016095">
    <property type="entry name" value="Ribosomal_uL1_3-a/b-sand"/>
</dbReference>
<dbReference type="InterPro" id="IPR023673">
    <property type="entry name" value="Ribosomal_uL1_CS"/>
</dbReference>
<dbReference type="NCBIfam" id="TIGR01169">
    <property type="entry name" value="rplA_bact"/>
    <property type="match status" value="1"/>
</dbReference>
<dbReference type="PANTHER" id="PTHR36427">
    <property type="entry name" value="54S RIBOSOMAL PROTEIN L1, MITOCHONDRIAL"/>
    <property type="match status" value="1"/>
</dbReference>
<dbReference type="PANTHER" id="PTHR36427:SF3">
    <property type="entry name" value="LARGE RIBOSOMAL SUBUNIT PROTEIN UL1M"/>
    <property type="match status" value="1"/>
</dbReference>
<dbReference type="Pfam" id="PF00687">
    <property type="entry name" value="Ribosomal_L1"/>
    <property type="match status" value="1"/>
</dbReference>
<dbReference type="PIRSF" id="PIRSF002155">
    <property type="entry name" value="Ribosomal_L1"/>
    <property type="match status" value="1"/>
</dbReference>
<dbReference type="SUPFAM" id="SSF56808">
    <property type="entry name" value="Ribosomal protein L1"/>
    <property type="match status" value="1"/>
</dbReference>
<dbReference type="PROSITE" id="PS01199">
    <property type="entry name" value="RIBOSOMAL_L1"/>
    <property type="match status" value="1"/>
</dbReference>
<reference key="1">
    <citation type="journal article" date="2006" name="PLoS Genet.">
        <title>The complete genome sequence and comparative genome analysis of the high pathogenicity Yersinia enterocolitica strain 8081.</title>
        <authorList>
            <person name="Thomson N.R."/>
            <person name="Howard S."/>
            <person name="Wren B.W."/>
            <person name="Holden M.T.G."/>
            <person name="Crossman L."/>
            <person name="Challis G.L."/>
            <person name="Churcher C."/>
            <person name="Mungall K."/>
            <person name="Brooks K."/>
            <person name="Chillingworth T."/>
            <person name="Feltwell T."/>
            <person name="Abdellah Z."/>
            <person name="Hauser H."/>
            <person name="Jagels K."/>
            <person name="Maddison M."/>
            <person name="Moule S."/>
            <person name="Sanders M."/>
            <person name="Whitehead S."/>
            <person name="Quail M.A."/>
            <person name="Dougan G."/>
            <person name="Parkhill J."/>
            <person name="Prentice M.B."/>
        </authorList>
    </citation>
    <scope>NUCLEOTIDE SEQUENCE [LARGE SCALE GENOMIC DNA]</scope>
    <source>
        <strain>NCTC 13174 / 8081</strain>
    </source>
</reference>
<feature type="chain" id="PRO_0000308139" description="Large ribosomal subunit protein uL1">
    <location>
        <begin position="1"/>
        <end position="234"/>
    </location>
</feature>
<sequence length="234" mass="24831">MAKLTKRMRVIRDKVDVTKQYDINEAVALLKELATAKFVESVDVAVNLGIDARKSDQNVRGATVLPHGTGRSVRVAVFAQGANAEAAKEAGAELVGMEDLADQIKKGEMNFDVVIASPDAMRVVGQLGQILGPRGLMPNPKVGTVTPNVAEAVKNAKAGQVRYRNDKNGIIHTTIGKVDFDSEKLKENLESLVVALKRAKPATAKGVYIKKISLSTTMGAGVAIDQSGLSAVVN</sequence>
<comment type="function">
    <text evidence="1">Binds directly to 23S rRNA. The L1 stalk is quite mobile in the ribosome, and is involved in E site tRNA release.</text>
</comment>
<comment type="function">
    <text evidence="1">Protein L1 is also a translational repressor protein, it controls the translation of the L11 operon by binding to its mRNA.</text>
</comment>
<comment type="subunit">
    <text evidence="1">Part of the 50S ribosomal subunit.</text>
</comment>
<comment type="similarity">
    <text evidence="1">Belongs to the universal ribosomal protein uL1 family.</text>
</comment>
<protein>
    <recommendedName>
        <fullName evidence="1">Large ribosomal subunit protein uL1</fullName>
    </recommendedName>
    <alternativeName>
        <fullName evidence="2">50S ribosomal protein L1</fullName>
    </alternativeName>
</protein>
<proteinExistence type="inferred from homology"/>
<evidence type="ECO:0000255" key="1">
    <source>
        <dbReference type="HAMAP-Rule" id="MF_01318"/>
    </source>
</evidence>
<evidence type="ECO:0000305" key="2"/>
<organism>
    <name type="scientific">Yersinia enterocolitica serotype O:8 / biotype 1B (strain NCTC 13174 / 8081)</name>
    <dbReference type="NCBI Taxonomy" id="393305"/>
    <lineage>
        <taxon>Bacteria</taxon>
        <taxon>Pseudomonadati</taxon>
        <taxon>Pseudomonadota</taxon>
        <taxon>Gammaproteobacteria</taxon>
        <taxon>Enterobacterales</taxon>
        <taxon>Yersiniaceae</taxon>
        <taxon>Yersinia</taxon>
    </lineage>
</organism>
<keyword id="KW-0678">Repressor</keyword>
<keyword id="KW-0687">Ribonucleoprotein</keyword>
<keyword id="KW-0689">Ribosomal protein</keyword>
<keyword id="KW-0694">RNA-binding</keyword>
<keyword id="KW-0699">rRNA-binding</keyword>
<keyword id="KW-0810">Translation regulation</keyword>
<keyword id="KW-0820">tRNA-binding</keyword>